<name>LPXK_LEGPH</name>
<gene>
    <name evidence="1" type="primary">lpxK</name>
    <name type="ordered locus">lpg1818</name>
</gene>
<dbReference type="EC" id="2.7.1.130" evidence="1"/>
<dbReference type="EMBL" id="AE017354">
    <property type="protein sequence ID" value="AAU27897.1"/>
    <property type="molecule type" value="Genomic_DNA"/>
</dbReference>
<dbReference type="RefSeq" id="WP_010947544.1">
    <property type="nucleotide sequence ID" value="NC_002942.5"/>
</dbReference>
<dbReference type="RefSeq" id="YP_095844.1">
    <property type="nucleotide sequence ID" value="NC_002942.5"/>
</dbReference>
<dbReference type="SMR" id="Q5ZUI0"/>
<dbReference type="STRING" id="272624.lpg1818"/>
<dbReference type="PaxDb" id="272624-lpg1818"/>
<dbReference type="GeneID" id="57035810"/>
<dbReference type="KEGG" id="lpn:lpg1818"/>
<dbReference type="PATRIC" id="fig|272624.6.peg.1906"/>
<dbReference type="eggNOG" id="COG1663">
    <property type="taxonomic scope" value="Bacteria"/>
</dbReference>
<dbReference type="HOGENOM" id="CLU_038816_2_0_6"/>
<dbReference type="OrthoDB" id="9766423at2"/>
<dbReference type="UniPathway" id="UPA00359">
    <property type="reaction ID" value="UER00482"/>
</dbReference>
<dbReference type="Proteomes" id="UP000000609">
    <property type="component" value="Chromosome"/>
</dbReference>
<dbReference type="GO" id="GO:0005886">
    <property type="term" value="C:plasma membrane"/>
    <property type="evidence" value="ECO:0007669"/>
    <property type="project" value="TreeGrafter"/>
</dbReference>
<dbReference type="GO" id="GO:0005524">
    <property type="term" value="F:ATP binding"/>
    <property type="evidence" value="ECO:0007669"/>
    <property type="project" value="UniProtKB-UniRule"/>
</dbReference>
<dbReference type="GO" id="GO:0009029">
    <property type="term" value="F:tetraacyldisaccharide 4'-kinase activity"/>
    <property type="evidence" value="ECO:0007669"/>
    <property type="project" value="UniProtKB-UniRule"/>
</dbReference>
<dbReference type="GO" id="GO:0009245">
    <property type="term" value="P:lipid A biosynthetic process"/>
    <property type="evidence" value="ECO:0007669"/>
    <property type="project" value="UniProtKB-UniRule"/>
</dbReference>
<dbReference type="GO" id="GO:0009244">
    <property type="term" value="P:lipopolysaccharide core region biosynthetic process"/>
    <property type="evidence" value="ECO:0007669"/>
    <property type="project" value="TreeGrafter"/>
</dbReference>
<dbReference type="HAMAP" id="MF_00409">
    <property type="entry name" value="LpxK"/>
    <property type="match status" value="1"/>
</dbReference>
<dbReference type="InterPro" id="IPR003758">
    <property type="entry name" value="LpxK"/>
</dbReference>
<dbReference type="InterPro" id="IPR027417">
    <property type="entry name" value="P-loop_NTPase"/>
</dbReference>
<dbReference type="NCBIfam" id="TIGR00682">
    <property type="entry name" value="lpxK"/>
    <property type="match status" value="1"/>
</dbReference>
<dbReference type="PANTHER" id="PTHR42724">
    <property type="entry name" value="TETRAACYLDISACCHARIDE 4'-KINASE"/>
    <property type="match status" value="1"/>
</dbReference>
<dbReference type="PANTHER" id="PTHR42724:SF1">
    <property type="entry name" value="TETRAACYLDISACCHARIDE 4'-KINASE, MITOCHONDRIAL-RELATED"/>
    <property type="match status" value="1"/>
</dbReference>
<dbReference type="Pfam" id="PF02606">
    <property type="entry name" value="LpxK"/>
    <property type="match status" value="1"/>
</dbReference>
<dbReference type="SUPFAM" id="SSF52540">
    <property type="entry name" value="P-loop containing nucleoside triphosphate hydrolases"/>
    <property type="match status" value="1"/>
</dbReference>
<feature type="chain" id="PRO_0000229962" description="Tetraacyldisaccharide 4'-kinase">
    <location>
        <begin position="1"/>
        <end position="323"/>
    </location>
</feature>
<feature type="binding site" evidence="1">
    <location>
        <begin position="56"/>
        <end position="63"/>
    </location>
    <ligand>
        <name>ATP</name>
        <dbReference type="ChEBI" id="CHEBI:30616"/>
    </ligand>
</feature>
<evidence type="ECO:0000255" key="1">
    <source>
        <dbReference type="HAMAP-Rule" id="MF_00409"/>
    </source>
</evidence>
<keyword id="KW-0067">ATP-binding</keyword>
<keyword id="KW-0418">Kinase</keyword>
<keyword id="KW-0441">Lipid A biosynthesis</keyword>
<keyword id="KW-0444">Lipid biosynthesis</keyword>
<keyword id="KW-0443">Lipid metabolism</keyword>
<keyword id="KW-0547">Nucleotide-binding</keyword>
<keyword id="KW-1185">Reference proteome</keyword>
<keyword id="KW-0808">Transferase</keyword>
<organism>
    <name type="scientific">Legionella pneumophila subsp. pneumophila (strain Philadelphia 1 / ATCC 33152 / DSM 7513)</name>
    <dbReference type="NCBI Taxonomy" id="272624"/>
    <lineage>
        <taxon>Bacteria</taxon>
        <taxon>Pseudomonadati</taxon>
        <taxon>Pseudomonadota</taxon>
        <taxon>Gammaproteobacteria</taxon>
        <taxon>Legionellales</taxon>
        <taxon>Legionellaceae</taxon>
        <taxon>Legionella</taxon>
    </lineage>
</organism>
<accession>Q5ZUI0</accession>
<reference key="1">
    <citation type="journal article" date="2004" name="Science">
        <title>The genomic sequence of the accidental pathogen Legionella pneumophila.</title>
        <authorList>
            <person name="Chien M."/>
            <person name="Morozova I."/>
            <person name="Shi S."/>
            <person name="Sheng H."/>
            <person name="Chen J."/>
            <person name="Gomez S.M."/>
            <person name="Asamani G."/>
            <person name="Hill K."/>
            <person name="Nuara J."/>
            <person name="Feder M."/>
            <person name="Rineer J."/>
            <person name="Greenberg J.J."/>
            <person name="Steshenko V."/>
            <person name="Park S.H."/>
            <person name="Zhao B."/>
            <person name="Teplitskaya E."/>
            <person name="Edwards J.R."/>
            <person name="Pampou S."/>
            <person name="Georghiou A."/>
            <person name="Chou I.-C."/>
            <person name="Iannuccilli W."/>
            <person name="Ulz M.E."/>
            <person name="Kim D.H."/>
            <person name="Geringer-Sameth A."/>
            <person name="Goldsberry C."/>
            <person name="Morozov P."/>
            <person name="Fischer S.G."/>
            <person name="Segal G."/>
            <person name="Qu X."/>
            <person name="Rzhetsky A."/>
            <person name="Zhang P."/>
            <person name="Cayanis E."/>
            <person name="De Jong P.J."/>
            <person name="Ju J."/>
            <person name="Kalachikov S."/>
            <person name="Shuman H.A."/>
            <person name="Russo J.J."/>
        </authorList>
    </citation>
    <scope>NUCLEOTIDE SEQUENCE [LARGE SCALE GENOMIC DNA]</scope>
    <source>
        <strain>Philadelphia 1 / ATCC 33152 / DSM 7513</strain>
    </source>
</reference>
<sequence length="323" mass="37023">MSFFVNRIWYGNHFLQWILVPFSWLYRIVIRTRRWYLQRFCQQLYPIPIIVVGNVTVGGVGKTPLVIEIAKKIQQKGLKVGIVSRGYKAAIKHFPYEVKLNDSAELVGDEPLMMARKINCPVVIAPKRNEAVRYLLDKHSVEIIISDDGLQHYKMGRSIEIVVIDGMRKLGNGFCLPAGPLREPDSRLKQVDFVIVNQGAAEGTYSMELIPKNIVRLSTQEEVSNDLFTSEVAAVAGIGNPQRFYSTLSQLGIKFNPYSYPDHHQFKPHDLNDIDLPVIMTEKDAVKCYSFSSDKLYYLPVEAKLNDSFWEAFWSHQQLQGYY</sequence>
<proteinExistence type="inferred from homology"/>
<protein>
    <recommendedName>
        <fullName evidence="1">Tetraacyldisaccharide 4'-kinase</fullName>
        <ecNumber evidence="1">2.7.1.130</ecNumber>
    </recommendedName>
    <alternativeName>
        <fullName evidence="1">Lipid A 4'-kinase</fullName>
    </alternativeName>
</protein>
<comment type="function">
    <text evidence="1">Transfers the gamma-phosphate of ATP to the 4'-position of a tetraacyldisaccharide 1-phosphate intermediate (termed DS-1-P) to form tetraacyldisaccharide 1,4'-bis-phosphate (lipid IVA).</text>
</comment>
<comment type="catalytic activity">
    <reaction evidence="1">
        <text>a lipid A disaccharide + ATP = a lipid IVA + ADP + H(+)</text>
        <dbReference type="Rhea" id="RHEA:67840"/>
        <dbReference type="ChEBI" id="CHEBI:15378"/>
        <dbReference type="ChEBI" id="CHEBI:30616"/>
        <dbReference type="ChEBI" id="CHEBI:176343"/>
        <dbReference type="ChEBI" id="CHEBI:176425"/>
        <dbReference type="ChEBI" id="CHEBI:456216"/>
        <dbReference type="EC" id="2.7.1.130"/>
    </reaction>
</comment>
<comment type="pathway">
    <text evidence="1">Glycolipid biosynthesis; lipid IV(A) biosynthesis; lipid IV(A) from (3R)-3-hydroxytetradecanoyl-[acyl-carrier-protein] and UDP-N-acetyl-alpha-D-glucosamine: step 6/6.</text>
</comment>
<comment type="similarity">
    <text evidence="1">Belongs to the LpxK family.</text>
</comment>